<organism>
    <name type="scientific">Homo sapiens</name>
    <name type="common">Human</name>
    <dbReference type="NCBI Taxonomy" id="9606"/>
    <lineage>
        <taxon>Eukaryota</taxon>
        <taxon>Metazoa</taxon>
        <taxon>Chordata</taxon>
        <taxon>Craniata</taxon>
        <taxon>Vertebrata</taxon>
        <taxon>Euteleostomi</taxon>
        <taxon>Mammalia</taxon>
        <taxon>Eutheria</taxon>
        <taxon>Euarchontoglires</taxon>
        <taxon>Primates</taxon>
        <taxon>Haplorrhini</taxon>
        <taxon>Catarrhini</taxon>
        <taxon>Hominidae</taxon>
        <taxon>Homo</taxon>
    </lineage>
</organism>
<gene>
    <name type="primary">OR4D9</name>
</gene>
<sequence length="314" mass="35666">MDQRNYTRVKEFTFLGITQSRELSQVLFTFLFLVYMTTLMGNFLIMVTVTCESHLHTPMYFLLRNLSILDICFSSITAPKVLIDLLSETKTISFSGCVTQMFFFHLLGGADVFSLSVMAFDRYIAISKPLHYMTIMSRGRCTGLIVASWVGGFVHSIAQISLLLPLPFCGPNVLDTFYCDVPQVLKLACTDTFTLELLMISNNGLVSWFVFFFLLISYTVILMMLRSHTGEGRRKAISTCTSHITVVTLHFVPCIYVYARPFTALPTDTAISVTFTVISPLLNPIIYTLRNQEMKLAMRKLKRRLGQSERILIQ</sequence>
<feature type="chain" id="PRO_0000150541" description="Olfactory receptor 4D9">
    <location>
        <begin position="1"/>
        <end position="314"/>
    </location>
</feature>
<feature type="topological domain" description="Extracellular" evidence="1">
    <location>
        <begin position="1"/>
        <end position="25"/>
    </location>
</feature>
<feature type="transmembrane region" description="Helical; Name=1" evidence="1">
    <location>
        <begin position="26"/>
        <end position="49"/>
    </location>
</feature>
<feature type="topological domain" description="Cytoplasmic" evidence="1">
    <location>
        <begin position="50"/>
        <end position="57"/>
    </location>
</feature>
<feature type="transmembrane region" description="Helical; Name=2" evidence="1">
    <location>
        <begin position="58"/>
        <end position="79"/>
    </location>
</feature>
<feature type="topological domain" description="Extracellular" evidence="1">
    <location>
        <begin position="80"/>
        <end position="100"/>
    </location>
</feature>
<feature type="transmembrane region" description="Helical; Name=3" evidence="1">
    <location>
        <begin position="101"/>
        <end position="120"/>
    </location>
</feature>
<feature type="topological domain" description="Cytoplasmic" evidence="1">
    <location>
        <begin position="121"/>
        <end position="139"/>
    </location>
</feature>
<feature type="transmembrane region" description="Helical; Name=4" evidence="1">
    <location>
        <begin position="140"/>
        <end position="158"/>
    </location>
</feature>
<feature type="topological domain" description="Extracellular" evidence="1">
    <location>
        <begin position="159"/>
        <end position="195"/>
    </location>
</feature>
<feature type="transmembrane region" description="Helical; Name=5" evidence="1">
    <location>
        <begin position="196"/>
        <end position="219"/>
    </location>
</feature>
<feature type="topological domain" description="Cytoplasmic" evidence="1">
    <location>
        <begin position="220"/>
        <end position="235"/>
    </location>
</feature>
<feature type="transmembrane region" description="Helical; Name=6" evidence="1">
    <location>
        <begin position="236"/>
        <end position="258"/>
    </location>
</feature>
<feature type="topological domain" description="Extracellular" evidence="1">
    <location>
        <begin position="259"/>
        <end position="269"/>
    </location>
</feature>
<feature type="transmembrane region" description="Helical; Name=7" evidence="1">
    <location>
        <begin position="270"/>
        <end position="289"/>
    </location>
</feature>
<feature type="topological domain" description="Cytoplasmic" evidence="1">
    <location>
        <begin position="290"/>
        <end position="314"/>
    </location>
</feature>
<feature type="glycosylation site" description="N-linked (GlcNAc...) asparagine" evidence="1">
    <location>
        <position position="5"/>
    </location>
</feature>
<feature type="disulfide bond" evidence="2">
    <location>
        <begin position="97"/>
        <end position="189"/>
    </location>
</feature>
<feature type="sequence variant" id="VAR_053170" description="In dbSNP:rs17501584.">
    <original>Q</original>
    <variation>R</variation>
    <location>
        <position position="159"/>
    </location>
</feature>
<feature type="sequence conflict" description="In Ref. 2; AC019093." evidence="3" ref="2">
    <original>ASWVGGF</original>
    <variation>GFLGGGL</variation>
    <location>
        <begin position="147"/>
        <end position="153"/>
    </location>
</feature>
<feature type="sequence conflict" description="In Ref. 2; AC019093." evidence="3" ref="2">
    <original>F</original>
    <variation>V</variation>
    <location>
        <position position="168"/>
    </location>
</feature>
<protein>
    <recommendedName>
        <fullName>Olfactory receptor 4D9</fullName>
    </recommendedName>
    <alternativeName>
        <fullName>Olfactory receptor OR11-253</fullName>
    </alternativeName>
</protein>
<reference key="1">
    <citation type="submission" date="2001-07" db="EMBL/GenBank/DDBJ databases">
        <title>Genome-wide discovery and analysis of human seven transmembrane helix receptor genes.</title>
        <authorList>
            <person name="Suwa M."/>
            <person name="Sato T."/>
            <person name="Okouchi I."/>
            <person name="Arita M."/>
            <person name="Futami K."/>
            <person name="Matsumoto S."/>
            <person name="Tsutsumi S."/>
            <person name="Aburatani H."/>
            <person name="Asai K."/>
            <person name="Akiyama Y."/>
        </authorList>
    </citation>
    <scope>NUCLEOTIDE SEQUENCE [GENOMIC DNA]</scope>
</reference>
<reference key="2">
    <citation type="journal article" date="2006" name="Nature">
        <title>Human chromosome 11 DNA sequence and analysis including novel gene identification.</title>
        <authorList>
            <person name="Taylor T.D."/>
            <person name="Noguchi H."/>
            <person name="Totoki Y."/>
            <person name="Toyoda A."/>
            <person name="Kuroki Y."/>
            <person name="Dewar K."/>
            <person name="Lloyd C."/>
            <person name="Itoh T."/>
            <person name="Takeda T."/>
            <person name="Kim D.-W."/>
            <person name="She X."/>
            <person name="Barlow K.F."/>
            <person name="Bloom T."/>
            <person name="Bruford E."/>
            <person name="Chang J.L."/>
            <person name="Cuomo C.A."/>
            <person name="Eichler E."/>
            <person name="FitzGerald M.G."/>
            <person name="Jaffe D.B."/>
            <person name="LaButti K."/>
            <person name="Nicol R."/>
            <person name="Park H.-S."/>
            <person name="Seaman C."/>
            <person name="Sougnez C."/>
            <person name="Yang X."/>
            <person name="Zimmer A.R."/>
            <person name="Zody M.C."/>
            <person name="Birren B.W."/>
            <person name="Nusbaum C."/>
            <person name="Fujiyama A."/>
            <person name="Hattori M."/>
            <person name="Rogers J."/>
            <person name="Lander E.S."/>
            <person name="Sakaki Y."/>
        </authorList>
    </citation>
    <scope>NUCLEOTIDE SEQUENCE [LARGE SCALE GENOMIC DNA]</scope>
</reference>
<reference key="3">
    <citation type="journal article" date="2004" name="Proc. Natl. Acad. Sci. U.S.A.">
        <title>The human olfactory receptor gene family.</title>
        <authorList>
            <person name="Malnic B."/>
            <person name="Godfrey P.A."/>
            <person name="Buck L.B."/>
        </authorList>
    </citation>
    <scope>IDENTIFICATION</scope>
</reference>
<reference key="4">
    <citation type="journal article" date="2004" name="Proc. Natl. Acad. Sci. U.S.A.">
        <authorList>
            <person name="Malnic B."/>
            <person name="Godfrey P.A."/>
            <person name="Buck L.B."/>
        </authorList>
    </citation>
    <scope>ERRATUM OF PUBMED:14983052</scope>
</reference>
<keyword id="KW-1003">Cell membrane</keyword>
<keyword id="KW-1015">Disulfide bond</keyword>
<keyword id="KW-0297">G-protein coupled receptor</keyword>
<keyword id="KW-0325">Glycoprotein</keyword>
<keyword id="KW-0472">Membrane</keyword>
<keyword id="KW-0552">Olfaction</keyword>
<keyword id="KW-0675">Receptor</keyword>
<keyword id="KW-1185">Reference proteome</keyword>
<keyword id="KW-0716">Sensory transduction</keyword>
<keyword id="KW-0807">Transducer</keyword>
<keyword id="KW-0812">Transmembrane</keyword>
<keyword id="KW-1133">Transmembrane helix</keyword>
<dbReference type="EMBL" id="AB065861">
    <property type="protein sequence ID" value="BAC06079.1"/>
    <property type="molecule type" value="Genomic_DNA"/>
</dbReference>
<dbReference type="EMBL" id="AC019093">
    <property type="status" value="NOT_ANNOTATED_CDS"/>
    <property type="molecule type" value="Genomic_DNA"/>
</dbReference>
<dbReference type="EMBL" id="BK004309">
    <property type="protein sequence ID" value="DAA04707.1"/>
    <property type="molecule type" value="Genomic_DNA"/>
</dbReference>
<dbReference type="CCDS" id="CCDS31564.1"/>
<dbReference type="RefSeq" id="NP_001004711.1">
    <property type="nucleotide sequence ID" value="NM_001004711.2"/>
</dbReference>
<dbReference type="SMR" id="Q8NGE8"/>
<dbReference type="FunCoup" id="Q8NGE8">
    <property type="interactions" value="416"/>
</dbReference>
<dbReference type="STRING" id="9606.ENSP00000493010"/>
<dbReference type="GlyCosmos" id="Q8NGE8">
    <property type="glycosylation" value="1 site, No reported glycans"/>
</dbReference>
<dbReference type="GlyGen" id="Q8NGE8">
    <property type="glycosylation" value="1 site"/>
</dbReference>
<dbReference type="PhosphoSitePlus" id="Q8NGE8"/>
<dbReference type="BioMuta" id="OR4D9"/>
<dbReference type="DMDM" id="134047863"/>
<dbReference type="MassIVE" id="Q8NGE8"/>
<dbReference type="PaxDb" id="9606-ENSP00000328563"/>
<dbReference type="PeptideAtlas" id="Q8NGE8"/>
<dbReference type="ProteomicsDB" id="73492"/>
<dbReference type="Antibodypedia" id="78031">
    <property type="antibodies" value="11 antibodies from 8 providers"/>
</dbReference>
<dbReference type="DNASU" id="390199"/>
<dbReference type="Ensembl" id="ENST00000641278.1">
    <property type="protein sequence ID" value="ENSP00000493042.1"/>
    <property type="gene ID" value="ENSG00000172742.6"/>
</dbReference>
<dbReference type="Ensembl" id="ENST00000641962.1">
    <property type="protein sequence ID" value="ENSP00000493010.1"/>
    <property type="gene ID" value="ENSG00000172742.6"/>
</dbReference>
<dbReference type="GeneID" id="390199"/>
<dbReference type="KEGG" id="hsa:390199"/>
<dbReference type="MANE-Select" id="ENST00000641962.1">
    <property type="protein sequence ID" value="ENSP00000493010.1"/>
    <property type="RefSeq nucleotide sequence ID" value="NM_001004711.2"/>
    <property type="RefSeq protein sequence ID" value="NP_001004711.1"/>
</dbReference>
<dbReference type="UCSC" id="uc010rkv.2">
    <property type="organism name" value="human"/>
</dbReference>
<dbReference type="AGR" id="HGNC:15178"/>
<dbReference type="CTD" id="390199"/>
<dbReference type="GeneCards" id="OR4D9"/>
<dbReference type="HGNC" id="HGNC:15178">
    <property type="gene designation" value="OR4D9"/>
</dbReference>
<dbReference type="HPA" id="ENSG00000172742">
    <property type="expression patterns" value="Not detected"/>
</dbReference>
<dbReference type="neXtProt" id="NX_Q8NGE8"/>
<dbReference type="OpenTargets" id="ENSG00000172742"/>
<dbReference type="PharmGKB" id="PA32276"/>
<dbReference type="VEuPathDB" id="HostDB:ENSG00000172742"/>
<dbReference type="eggNOG" id="ENOG502SIBY">
    <property type="taxonomic scope" value="Eukaryota"/>
</dbReference>
<dbReference type="GeneTree" id="ENSGT00940000164403"/>
<dbReference type="HOGENOM" id="CLU_012526_8_1_1"/>
<dbReference type="InParanoid" id="Q8NGE8"/>
<dbReference type="OMA" id="CEAHLHT"/>
<dbReference type="OrthoDB" id="9444602at2759"/>
<dbReference type="PAN-GO" id="Q8NGE8">
    <property type="GO annotations" value="2 GO annotations based on evolutionary models"/>
</dbReference>
<dbReference type="PhylomeDB" id="Q8NGE8"/>
<dbReference type="TreeFam" id="TF352732"/>
<dbReference type="PathwayCommons" id="Q8NGE8"/>
<dbReference type="Reactome" id="R-HSA-9752946">
    <property type="pathway name" value="Expression and translocation of olfactory receptors"/>
</dbReference>
<dbReference type="BioGRID-ORCS" id="390199">
    <property type="hits" value="32 hits in 748 CRISPR screens"/>
</dbReference>
<dbReference type="GeneWiki" id="OR4D9"/>
<dbReference type="GenomeRNAi" id="390199"/>
<dbReference type="Pharos" id="Q8NGE8">
    <property type="development level" value="Tdark"/>
</dbReference>
<dbReference type="PRO" id="PR:Q8NGE8"/>
<dbReference type="Proteomes" id="UP000005640">
    <property type="component" value="Chromosome 11"/>
</dbReference>
<dbReference type="RNAct" id="Q8NGE8">
    <property type="molecule type" value="protein"/>
</dbReference>
<dbReference type="ExpressionAtlas" id="Q8NGE8">
    <property type="expression patterns" value="baseline and differential"/>
</dbReference>
<dbReference type="GO" id="GO:0005886">
    <property type="term" value="C:plasma membrane"/>
    <property type="evidence" value="ECO:0000318"/>
    <property type="project" value="GO_Central"/>
</dbReference>
<dbReference type="GO" id="GO:0004930">
    <property type="term" value="F:G protein-coupled receptor activity"/>
    <property type="evidence" value="ECO:0007669"/>
    <property type="project" value="UniProtKB-KW"/>
</dbReference>
<dbReference type="GO" id="GO:0004984">
    <property type="term" value="F:olfactory receptor activity"/>
    <property type="evidence" value="ECO:0000318"/>
    <property type="project" value="GO_Central"/>
</dbReference>
<dbReference type="CDD" id="cd15936">
    <property type="entry name" value="7tmA_OR4D-like"/>
    <property type="match status" value="1"/>
</dbReference>
<dbReference type="FunFam" id="1.10.1220.70:FF:000001">
    <property type="entry name" value="Olfactory receptor"/>
    <property type="match status" value="1"/>
</dbReference>
<dbReference type="FunFam" id="1.20.1070.10:FF:000007">
    <property type="entry name" value="Olfactory receptor"/>
    <property type="match status" value="1"/>
</dbReference>
<dbReference type="Gene3D" id="1.20.1070.10">
    <property type="entry name" value="Rhodopsin 7-helix transmembrane proteins"/>
    <property type="match status" value="1"/>
</dbReference>
<dbReference type="InterPro" id="IPR000276">
    <property type="entry name" value="GPCR_Rhodpsn"/>
</dbReference>
<dbReference type="InterPro" id="IPR017452">
    <property type="entry name" value="GPCR_Rhodpsn_7TM"/>
</dbReference>
<dbReference type="InterPro" id="IPR000725">
    <property type="entry name" value="Olfact_rcpt"/>
</dbReference>
<dbReference type="InterPro" id="IPR050427">
    <property type="entry name" value="Olfactory_Receptors"/>
</dbReference>
<dbReference type="PANTHER" id="PTHR48002">
    <property type="entry name" value="OLFACTORY RECEPTOR"/>
    <property type="match status" value="1"/>
</dbReference>
<dbReference type="Pfam" id="PF13853">
    <property type="entry name" value="7tm_4"/>
    <property type="match status" value="1"/>
</dbReference>
<dbReference type="PRINTS" id="PR00237">
    <property type="entry name" value="GPCRRHODOPSN"/>
</dbReference>
<dbReference type="PRINTS" id="PR00245">
    <property type="entry name" value="OLFACTORYR"/>
</dbReference>
<dbReference type="SUPFAM" id="SSF81321">
    <property type="entry name" value="Family A G protein-coupled receptor-like"/>
    <property type="match status" value="1"/>
</dbReference>
<dbReference type="PROSITE" id="PS00237">
    <property type="entry name" value="G_PROTEIN_RECEP_F1_1"/>
    <property type="match status" value="1"/>
</dbReference>
<dbReference type="PROSITE" id="PS50262">
    <property type="entry name" value="G_PROTEIN_RECEP_F1_2"/>
    <property type="match status" value="1"/>
</dbReference>
<comment type="function">
    <text evidence="3">Odorant receptor.</text>
</comment>
<comment type="subcellular location">
    <subcellularLocation>
        <location>Cell membrane</location>
        <topology>Multi-pass membrane protein</topology>
    </subcellularLocation>
</comment>
<comment type="similarity">
    <text evidence="2">Belongs to the G-protein coupled receptor 1 family.</text>
</comment>
<comment type="online information" name="Human Olfactory Receptor Data Exploratorium (HORDE)">
    <link uri="http://genome.weizmann.ac.il/horde/card/index/symbol:OR4D9"/>
</comment>
<name>OR4D9_HUMAN</name>
<proteinExistence type="inferred from homology"/>
<accession>Q8NGE8</accession>
<accession>Q6IFF3</accession>
<evidence type="ECO:0000255" key="1"/>
<evidence type="ECO:0000255" key="2">
    <source>
        <dbReference type="PROSITE-ProRule" id="PRU00521"/>
    </source>
</evidence>
<evidence type="ECO:0000305" key="3"/>